<protein>
    <recommendedName>
        <fullName evidence="1">Large ribosomal subunit protein bL33</fullName>
    </recommendedName>
    <alternativeName>
        <fullName evidence="2">50S ribosomal protein L33</fullName>
    </alternativeName>
</protein>
<organism>
    <name type="scientific">Beijerinckia indica subsp. indica (strain ATCC 9039 / DSM 1715 / NCIMB 8712)</name>
    <dbReference type="NCBI Taxonomy" id="395963"/>
    <lineage>
        <taxon>Bacteria</taxon>
        <taxon>Pseudomonadati</taxon>
        <taxon>Pseudomonadota</taxon>
        <taxon>Alphaproteobacteria</taxon>
        <taxon>Hyphomicrobiales</taxon>
        <taxon>Beijerinckiaceae</taxon>
        <taxon>Beijerinckia</taxon>
    </lineage>
</organism>
<dbReference type="EMBL" id="CP001016">
    <property type="protein sequence ID" value="ACB96588.1"/>
    <property type="molecule type" value="Genomic_DNA"/>
</dbReference>
<dbReference type="RefSeq" id="WP_012385937.1">
    <property type="nucleotide sequence ID" value="NC_010581.1"/>
</dbReference>
<dbReference type="SMR" id="B2IBG2"/>
<dbReference type="STRING" id="395963.Bind_3026"/>
<dbReference type="KEGG" id="bid:Bind_3026"/>
<dbReference type="eggNOG" id="COG0267">
    <property type="taxonomic scope" value="Bacteria"/>
</dbReference>
<dbReference type="HOGENOM" id="CLU_190949_1_1_5"/>
<dbReference type="OrthoDB" id="21586at2"/>
<dbReference type="Proteomes" id="UP000001695">
    <property type="component" value="Chromosome"/>
</dbReference>
<dbReference type="GO" id="GO:0022625">
    <property type="term" value="C:cytosolic large ribosomal subunit"/>
    <property type="evidence" value="ECO:0007669"/>
    <property type="project" value="TreeGrafter"/>
</dbReference>
<dbReference type="GO" id="GO:0003735">
    <property type="term" value="F:structural constituent of ribosome"/>
    <property type="evidence" value="ECO:0007669"/>
    <property type="project" value="InterPro"/>
</dbReference>
<dbReference type="GO" id="GO:0006412">
    <property type="term" value="P:translation"/>
    <property type="evidence" value="ECO:0007669"/>
    <property type="project" value="UniProtKB-UniRule"/>
</dbReference>
<dbReference type="Gene3D" id="2.20.28.120">
    <property type="entry name" value="Ribosomal protein L33"/>
    <property type="match status" value="1"/>
</dbReference>
<dbReference type="HAMAP" id="MF_00294">
    <property type="entry name" value="Ribosomal_bL33"/>
    <property type="match status" value="1"/>
</dbReference>
<dbReference type="InterPro" id="IPR001705">
    <property type="entry name" value="Ribosomal_bL33"/>
</dbReference>
<dbReference type="InterPro" id="IPR018264">
    <property type="entry name" value="Ribosomal_bL33_CS"/>
</dbReference>
<dbReference type="InterPro" id="IPR038584">
    <property type="entry name" value="Ribosomal_bL33_sf"/>
</dbReference>
<dbReference type="InterPro" id="IPR011332">
    <property type="entry name" value="Ribosomal_zn-bd"/>
</dbReference>
<dbReference type="NCBIfam" id="NF001860">
    <property type="entry name" value="PRK00595.1"/>
    <property type="match status" value="1"/>
</dbReference>
<dbReference type="NCBIfam" id="TIGR01023">
    <property type="entry name" value="rpmG_bact"/>
    <property type="match status" value="1"/>
</dbReference>
<dbReference type="PANTHER" id="PTHR15238">
    <property type="entry name" value="54S RIBOSOMAL PROTEIN L39, MITOCHONDRIAL"/>
    <property type="match status" value="1"/>
</dbReference>
<dbReference type="PANTHER" id="PTHR15238:SF1">
    <property type="entry name" value="LARGE RIBOSOMAL SUBUNIT PROTEIN BL33M"/>
    <property type="match status" value="1"/>
</dbReference>
<dbReference type="Pfam" id="PF00471">
    <property type="entry name" value="Ribosomal_L33"/>
    <property type="match status" value="1"/>
</dbReference>
<dbReference type="SUPFAM" id="SSF57829">
    <property type="entry name" value="Zn-binding ribosomal proteins"/>
    <property type="match status" value="1"/>
</dbReference>
<dbReference type="PROSITE" id="PS00582">
    <property type="entry name" value="RIBOSOMAL_L33"/>
    <property type="match status" value="1"/>
</dbReference>
<sequence length="55" mass="6425">MAKAAMIKIKLLSTADTGYFYVTKKNARTKTEKLSFKKYDPVVRKHVEFKETKIK</sequence>
<proteinExistence type="inferred from homology"/>
<comment type="similarity">
    <text evidence="1">Belongs to the bacterial ribosomal protein bL33 family.</text>
</comment>
<gene>
    <name evidence="1" type="primary">rpmG</name>
    <name type="ordered locus">Bind_3026</name>
</gene>
<reference key="1">
    <citation type="journal article" date="2010" name="J. Bacteriol.">
        <title>Complete genome sequence of Beijerinckia indica subsp. indica.</title>
        <authorList>
            <person name="Tamas I."/>
            <person name="Dedysh S.N."/>
            <person name="Liesack W."/>
            <person name="Stott M.B."/>
            <person name="Alam M."/>
            <person name="Murrell J.C."/>
            <person name="Dunfield P.F."/>
        </authorList>
    </citation>
    <scope>NUCLEOTIDE SEQUENCE [LARGE SCALE GENOMIC DNA]</scope>
    <source>
        <strain>ATCC 9039 / DSM 1715 / NCIMB 8712</strain>
    </source>
</reference>
<name>RL33_BEII9</name>
<keyword id="KW-1185">Reference proteome</keyword>
<keyword id="KW-0687">Ribonucleoprotein</keyword>
<keyword id="KW-0689">Ribosomal protein</keyword>
<feature type="chain" id="PRO_1000115094" description="Large ribosomal subunit protein bL33">
    <location>
        <begin position="1"/>
        <end position="55"/>
    </location>
</feature>
<accession>B2IBG2</accession>
<evidence type="ECO:0000255" key="1">
    <source>
        <dbReference type="HAMAP-Rule" id="MF_00294"/>
    </source>
</evidence>
<evidence type="ECO:0000305" key="2"/>